<dbReference type="EC" id="6.1.1.6" evidence="1"/>
<dbReference type="EMBL" id="CP000909">
    <property type="protein sequence ID" value="ABY34455.1"/>
    <property type="molecule type" value="Genomic_DNA"/>
</dbReference>
<dbReference type="RefSeq" id="WP_012257111.1">
    <property type="nucleotide sequence ID" value="NC_010175.1"/>
</dbReference>
<dbReference type="RefSeq" id="YP_001634844.1">
    <property type="nucleotide sequence ID" value="NC_010175.1"/>
</dbReference>
<dbReference type="SMR" id="A9WK04"/>
<dbReference type="FunCoup" id="A9WK04">
    <property type="interactions" value="530"/>
</dbReference>
<dbReference type="STRING" id="324602.Caur_1226"/>
<dbReference type="EnsemblBacteria" id="ABY34455">
    <property type="protein sequence ID" value="ABY34455"/>
    <property type="gene ID" value="Caur_1226"/>
</dbReference>
<dbReference type="KEGG" id="cau:Caur_1226"/>
<dbReference type="PATRIC" id="fig|324602.8.peg.1408"/>
<dbReference type="eggNOG" id="COG1190">
    <property type="taxonomic scope" value="Bacteria"/>
</dbReference>
<dbReference type="HOGENOM" id="CLU_008255_6_0_0"/>
<dbReference type="InParanoid" id="A9WK04"/>
<dbReference type="Proteomes" id="UP000002008">
    <property type="component" value="Chromosome"/>
</dbReference>
<dbReference type="GO" id="GO:0005737">
    <property type="term" value="C:cytoplasm"/>
    <property type="evidence" value="ECO:0000318"/>
    <property type="project" value="GO_Central"/>
</dbReference>
<dbReference type="GO" id="GO:0005829">
    <property type="term" value="C:cytosol"/>
    <property type="evidence" value="ECO:0000318"/>
    <property type="project" value="GO_Central"/>
</dbReference>
<dbReference type="GO" id="GO:0005524">
    <property type="term" value="F:ATP binding"/>
    <property type="evidence" value="ECO:0007669"/>
    <property type="project" value="UniProtKB-UniRule"/>
</dbReference>
<dbReference type="GO" id="GO:0004824">
    <property type="term" value="F:lysine-tRNA ligase activity"/>
    <property type="evidence" value="ECO:0000318"/>
    <property type="project" value="GO_Central"/>
</dbReference>
<dbReference type="GO" id="GO:0000287">
    <property type="term" value="F:magnesium ion binding"/>
    <property type="evidence" value="ECO:0007669"/>
    <property type="project" value="UniProtKB-UniRule"/>
</dbReference>
<dbReference type="GO" id="GO:0000049">
    <property type="term" value="F:tRNA binding"/>
    <property type="evidence" value="ECO:0000318"/>
    <property type="project" value="GO_Central"/>
</dbReference>
<dbReference type="GO" id="GO:0006430">
    <property type="term" value="P:lysyl-tRNA aminoacylation"/>
    <property type="evidence" value="ECO:0000318"/>
    <property type="project" value="GO_Central"/>
</dbReference>
<dbReference type="CDD" id="cd00775">
    <property type="entry name" value="LysRS_core"/>
    <property type="match status" value="1"/>
</dbReference>
<dbReference type="CDD" id="cd04322">
    <property type="entry name" value="LysRS_N"/>
    <property type="match status" value="1"/>
</dbReference>
<dbReference type="FunFam" id="3.30.930.10:FF:000234">
    <property type="entry name" value="Lysine--tRNA ligase"/>
    <property type="match status" value="1"/>
</dbReference>
<dbReference type="Gene3D" id="3.30.930.10">
    <property type="entry name" value="Bira Bifunctional Protein, Domain 2"/>
    <property type="match status" value="1"/>
</dbReference>
<dbReference type="Gene3D" id="2.40.50.140">
    <property type="entry name" value="Nucleic acid-binding proteins"/>
    <property type="match status" value="1"/>
</dbReference>
<dbReference type="HAMAP" id="MF_00252">
    <property type="entry name" value="Lys_tRNA_synth_class2"/>
    <property type="match status" value="1"/>
</dbReference>
<dbReference type="InterPro" id="IPR004364">
    <property type="entry name" value="Aa-tRNA-synt_II"/>
</dbReference>
<dbReference type="InterPro" id="IPR006195">
    <property type="entry name" value="aa-tRNA-synth_II"/>
</dbReference>
<dbReference type="InterPro" id="IPR045864">
    <property type="entry name" value="aa-tRNA-synth_II/BPL/LPL"/>
</dbReference>
<dbReference type="InterPro" id="IPR002313">
    <property type="entry name" value="Lys-tRNA-ligase_II"/>
</dbReference>
<dbReference type="InterPro" id="IPR044136">
    <property type="entry name" value="Lys-tRNA-ligase_II_N"/>
</dbReference>
<dbReference type="InterPro" id="IPR018149">
    <property type="entry name" value="Lys-tRNA-synth_II_C"/>
</dbReference>
<dbReference type="InterPro" id="IPR012340">
    <property type="entry name" value="NA-bd_OB-fold"/>
</dbReference>
<dbReference type="InterPro" id="IPR004365">
    <property type="entry name" value="NA-bd_OB_tRNA"/>
</dbReference>
<dbReference type="NCBIfam" id="TIGR00499">
    <property type="entry name" value="lysS_bact"/>
    <property type="match status" value="1"/>
</dbReference>
<dbReference type="NCBIfam" id="NF001756">
    <property type="entry name" value="PRK00484.1"/>
    <property type="match status" value="1"/>
</dbReference>
<dbReference type="PANTHER" id="PTHR42918:SF15">
    <property type="entry name" value="LYSINE--TRNA LIGASE, CHLOROPLASTIC_MITOCHONDRIAL"/>
    <property type="match status" value="1"/>
</dbReference>
<dbReference type="PANTHER" id="PTHR42918">
    <property type="entry name" value="LYSYL-TRNA SYNTHETASE"/>
    <property type="match status" value="1"/>
</dbReference>
<dbReference type="Pfam" id="PF00152">
    <property type="entry name" value="tRNA-synt_2"/>
    <property type="match status" value="1"/>
</dbReference>
<dbReference type="Pfam" id="PF01336">
    <property type="entry name" value="tRNA_anti-codon"/>
    <property type="match status" value="1"/>
</dbReference>
<dbReference type="PRINTS" id="PR00982">
    <property type="entry name" value="TRNASYNTHLYS"/>
</dbReference>
<dbReference type="SUPFAM" id="SSF55681">
    <property type="entry name" value="Class II aaRS and biotin synthetases"/>
    <property type="match status" value="1"/>
</dbReference>
<dbReference type="SUPFAM" id="SSF50249">
    <property type="entry name" value="Nucleic acid-binding proteins"/>
    <property type="match status" value="1"/>
</dbReference>
<dbReference type="PROSITE" id="PS50862">
    <property type="entry name" value="AA_TRNA_LIGASE_II"/>
    <property type="match status" value="1"/>
</dbReference>
<feature type="chain" id="PRO_1000078495" description="Lysine--tRNA ligase">
    <location>
        <begin position="1"/>
        <end position="491"/>
    </location>
</feature>
<feature type="binding site" evidence="1">
    <location>
        <position position="399"/>
    </location>
    <ligand>
        <name>Mg(2+)</name>
        <dbReference type="ChEBI" id="CHEBI:18420"/>
        <label>1</label>
    </ligand>
</feature>
<feature type="binding site" evidence="1">
    <location>
        <position position="406"/>
    </location>
    <ligand>
        <name>Mg(2+)</name>
        <dbReference type="ChEBI" id="CHEBI:18420"/>
        <label>1</label>
    </ligand>
</feature>
<feature type="binding site" evidence="1">
    <location>
        <position position="406"/>
    </location>
    <ligand>
        <name>Mg(2+)</name>
        <dbReference type="ChEBI" id="CHEBI:18420"/>
        <label>2</label>
    </ligand>
</feature>
<name>SYK_CHLAA</name>
<reference key="1">
    <citation type="journal article" date="2011" name="BMC Genomics">
        <title>Complete genome sequence of the filamentous anoxygenic phototrophic bacterium Chloroflexus aurantiacus.</title>
        <authorList>
            <person name="Tang K.H."/>
            <person name="Barry K."/>
            <person name="Chertkov O."/>
            <person name="Dalin E."/>
            <person name="Han C.S."/>
            <person name="Hauser L.J."/>
            <person name="Honchak B.M."/>
            <person name="Karbach L.E."/>
            <person name="Land M.L."/>
            <person name="Lapidus A."/>
            <person name="Larimer F.W."/>
            <person name="Mikhailova N."/>
            <person name="Pitluck S."/>
            <person name="Pierson B.K."/>
            <person name="Blankenship R.E."/>
        </authorList>
    </citation>
    <scope>NUCLEOTIDE SEQUENCE [LARGE SCALE GENOMIC DNA]</scope>
    <source>
        <strain>ATCC 29366 / DSM 635 / J-10-fl</strain>
    </source>
</reference>
<organism>
    <name type="scientific">Chloroflexus aurantiacus (strain ATCC 29366 / DSM 635 / J-10-fl)</name>
    <dbReference type="NCBI Taxonomy" id="324602"/>
    <lineage>
        <taxon>Bacteria</taxon>
        <taxon>Bacillati</taxon>
        <taxon>Chloroflexota</taxon>
        <taxon>Chloroflexia</taxon>
        <taxon>Chloroflexales</taxon>
        <taxon>Chloroflexineae</taxon>
        <taxon>Chloroflexaceae</taxon>
        <taxon>Chloroflexus</taxon>
    </lineage>
</organism>
<protein>
    <recommendedName>
        <fullName evidence="1">Lysine--tRNA ligase</fullName>
        <ecNumber evidence="1">6.1.1.6</ecNumber>
    </recommendedName>
    <alternativeName>
        <fullName evidence="1">Lysyl-tRNA synthetase</fullName>
        <shortName evidence="1">LysRS</shortName>
    </alternativeName>
</protein>
<keyword id="KW-0030">Aminoacyl-tRNA synthetase</keyword>
<keyword id="KW-0067">ATP-binding</keyword>
<keyword id="KW-0963">Cytoplasm</keyword>
<keyword id="KW-0436">Ligase</keyword>
<keyword id="KW-0460">Magnesium</keyword>
<keyword id="KW-0479">Metal-binding</keyword>
<keyword id="KW-0547">Nucleotide-binding</keyword>
<keyword id="KW-0648">Protein biosynthesis</keyword>
<keyword id="KW-1185">Reference proteome</keyword>
<proteinExistence type="inferred from homology"/>
<sequence>MELNDLQAQRAAKLAELRAAGLDPYPPRCYRSHTIAEALAAFDDLVAQSTTLTLTGRIIGARRIMGKIAFAHIEDGTGEIQLWLSRADLGDEWFERFRDQLDTFDIVQASGVLRCTKTGERSLFVRELAILAKAINPPPEKWAGLQDVEERHRQRYLDLIVNRDRREIFRARARVISTMRRVLDERGFLEVETPVLQPLYGGAAARPFITYHNALGQNLYLRIATELYLKRLIVGGFPGVYEIGKNFRNEGVDRSHNPEFTMMECYQAYADYHAMMTLVEEMLSEICLAVHGTTTITYQGRELDFRPPWPRIAMATAIADRTGIDITQITDLDALQEAISARGLRVERKASWAKQVDELFSEFVQPHLFQPTFIIDYPVAMSPLAKRIPDRPDFTERFEAFIAGMEIGNAFTELNDPFDQEERFREQLRAFAAGDEEAHQMDEDFINALRYGMPPTGGLGVGIDRLVMVLTDQSNIREVILFPHLRERSDE</sequence>
<comment type="catalytic activity">
    <reaction evidence="1">
        <text>tRNA(Lys) + L-lysine + ATP = L-lysyl-tRNA(Lys) + AMP + diphosphate</text>
        <dbReference type="Rhea" id="RHEA:20792"/>
        <dbReference type="Rhea" id="RHEA-COMP:9696"/>
        <dbReference type="Rhea" id="RHEA-COMP:9697"/>
        <dbReference type="ChEBI" id="CHEBI:30616"/>
        <dbReference type="ChEBI" id="CHEBI:32551"/>
        <dbReference type="ChEBI" id="CHEBI:33019"/>
        <dbReference type="ChEBI" id="CHEBI:78442"/>
        <dbReference type="ChEBI" id="CHEBI:78529"/>
        <dbReference type="ChEBI" id="CHEBI:456215"/>
        <dbReference type="EC" id="6.1.1.6"/>
    </reaction>
</comment>
<comment type="cofactor">
    <cofactor evidence="1">
        <name>Mg(2+)</name>
        <dbReference type="ChEBI" id="CHEBI:18420"/>
    </cofactor>
    <text evidence="1">Binds 3 Mg(2+) ions per subunit.</text>
</comment>
<comment type="subunit">
    <text evidence="1">Homodimer.</text>
</comment>
<comment type="subcellular location">
    <subcellularLocation>
        <location evidence="1">Cytoplasm</location>
    </subcellularLocation>
</comment>
<comment type="similarity">
    <text evidence="1">Belongs to the class-II aminoacyl-tRNA synthetase family.</text>
</comment>
<evidence type="ECO:0000255" key="1">
    <source>
        <dbReference type="HAMAP-Rule" id="MF_00252"/>
    </source>
</evidence>
<accession>A9WK04</accession>
<gene>
    <name evidence="1" type="primary">lysS</name>
    <name type="ordered locus">Caur_1226</name>
</gene>